<keyword id="KW-0963">Cytoplasm</keyword>
<keyword id="KW-0342">GTP-binding</keyword>
<keyword id="KW-0378">Hydrolase</keyword>
<keyword id="KW-0479">Metal-binding</keyword>
<keyword id="KW-0547">Nucleotide-binding</keyword>
<keyword id="KW-1185">Reference proteome</keyword>
<keyword id="KW-0690">Ribosome biogenesis</keyword>
<keyword id="KW-0694">RNA-binding</keyword>
<keyword id="KW-0699">rRNA-binding</keyword>
<keyword id="KW-0862">Zinc</keyword>
<accession>A7ZV32</accession>
<evidence type="ECO:0000255" key="1">
    <source>
        <dbReference type="HAMAP-Rule" id="MF_01820"/>
    </source>
</evidence>
<evidence type="ECO:0000255" key="2">
    <source>
        <dbReference type="PROSITE-ProRule" id="PRU01058"/>
    </source>
</evidence>
<evidence type="ECO:0000256" key="3">
    <source>
        <dbReference type="SAM" id="MobiDB-lite"/>
    </source>
</evidence>
<sequence>MSKNKLSKGQQRRVNANHQRRLKTSKEKPDYDDNLFGEPDEGIVISRFGMHADVESADGDVHRCNIRRTIRSLVTGDRVVWRPGKPAAEGVNVKGIVEAVHERTSVLTRPDFYDGVKPIAANIDQIVIVSAILPELSLNIIDRYLVACETLQIEPIIVLNKIDLLDDEGMAFVNEQMDIYRNIGYRVLMVSSHTQDGLKPLEEALTGRISIFAGQSGVGKSSLLNALLGLQKEILTNDVSDNSGLGQHTTTAARLYHFPHGGDVIDSPGVREFGLWHLEPEQITQGFVEFHDYLGLCKYRDCKHDTDPGCAIREAVEEGKIAETRFENYHRILESMAQVKTRKNFSDTDD</sequence>
<comment type="function">
    <text evidence="1">One of several proteins that assist in the late maturation steps of the functional core of the 30S ribosomal subunit. Helps release RbfA from mature subunits. May play a role in the assembly of ribosomal proteins into the subunit. Circularly permuted GTPase that catalyzes slow GTP hydrolysis, GTPase activity is stimulated by the 30S ribosomal subunit.</text>
</comment>
<comment type="cofactor">
    <cofactor evidence="1">
        <name>Zn(2+)</name>
        <dbReference type="ChEBI" id="CHEBI:29105"/>
    </cofactor>
    <text evidence="1">Binds 1 zinc ion per subunit.</text>
</comment>
<comment type="subunit">
    <text evidence="1">Monomer. Associates with 30S ribosomal subunit, binds 16S rRNA.</text>
</comment>
<comment type="subcellular location">
    <subcellularLocation>
        <location evidence="1">Cytoplasm</location>
    </subcellularLocation>
</comment>
<comment type="similarity">
    <text evidence="1">Belongs to the TRAFAC class YlqF/YawG GTPase family. RsgA subfamily.</text>
</comment>
<name>RSGA_ECO24</name>
<protein>
    <recommendedName>
        <fullName evidence="1">Small ribosomal subunit biogenesis GTPase RsgA</fullName>
        <ecNumber evidence="1">3.6.1.-</ecNumber>
    </recommendedName>
</protein>
<organism>
    <name type="scientific">Escherichia coli O139:H28 (strain E24377A / ETEC)</name>
    <dbReference type="NCBI Taxonomy" id="331111"/>
    <lineage>
        <taxon>Bacteria</taxon>
        <taxon>Pseudomonadati</taxon>
        <taxon>Pseudomonadota</taxon>
        <taxon>Gammaproteobacteria</taxon>
        <taxon>Enterobacterales</taxon>
        <taxon>Enterobacteriaceae</taxon>
        <taxon>Escherichia</taxon>
    </lineage>
</organism>
<reference key="1">
    <citation type="journal article" date="2008" name="J. Bacteriol.">
        <title>The pangenome structure of Escherichia coli: comparative genomic analysis of E. coli commensal and pathogenic isolates.</title>
        <authorList>
            <person name="Rasko D.A."/>
            <person name="Rosovitz M.J."/>
            <person name="Myers G.S.A."/>
            <person name="Mongodin E.F."/>
            <person name="Fricke W.F."/>
            <person name="Gajer P."/>
            <person name="Crabtree J."/>
            <person name="Sebaihia M."/>
            <person name="Thomson N.R."/>
            <person name="Chaudhuri R."/>
            <person name="Henderson I.R."/>
            <person name="Sperandio V."/>
            <person name="Ravel J."/>
        </authorList>
    </citation>
    <scope>NUCLEOTIDE SEQUENCE [LARGE SCALE GENOMIC DNA]</scope>
    <source>
        <strain>E24377A / ETEC</strain>
    </source>
</reference>
<gene>
    <name evidence="1" type="primary">rsgA</name>
    <name type="ordered locus">EcE24377A_4718</name>
</gene>
<dbReference type="EC" id="3.6.1.-" evidence="1"/>
<dbReference type="EMBL" id="CP000800">
    <property type="protein sequence ID" value="ABV17904.1"/>
    <property type="molecule type" value="Genomic_DNA"/>
</dbReference>
<dbReference type="RefSeq" id="WP_000041970.1">
    <property type="nucleotide sequence ID" value="NC_009801.1"/>
</dbReference>
<dbReference type="SMR" id="A7ZV32"/>
<dbReference type="GeneID" id="93777661"/>
<dbReference type="KEGG" id="ecw:EcE24377A_4718"/>
<dbReference type="HOGENOM" id="CLU_033617_2_0_6"/>
<dbReference type="Proteomes" id="UP000001122">
    <property type="component" value="Chromosome"/>
</dbReference>
<dbReference type="GO" id="GO:0005737">
    <property type="term" value="C:cytoplasm"/>
    <property type="evidence" value="ECO:0007669"/>
    <property type="project" value="UniProtKB-SubCell"/>
</dbReference>
<dbReference type="GO" id="GO:0005525">
    <property type="term" value="F:GTP binding"/>
    <property type="evidence" value="ECO:0007669"/>
    <property type="project" value="UniProtKB-UniRule"/>
</dbReference>
<dbReference type="GO" id="GO:0003924">
    <property type="term" value="F:GTPase activity"/>
    <property type="evidence" value="ECO:0007669"/>
    <property type="project" value="UniProtKB-UniRule"/>
</dbReference>
<dbReference type="GO" id="GO:0046872">
    <property type="term" value="F:metal ion binding"/>
    <property type="evidence" value="ECO:0007669"/>
    <property type="project" value="UniProtKB-KW"/>
</dbReference>
<dbReference type="GO" id="GO:0019843">
    <property type="term" value="F:rRNA binding"/>
    <property type="evidence" value="ECO:0007669"/>
    <property type="project" value="UniProtKB-KW"/>
</dbReference>
<dbReference type="GO" id="GO:0042274">
    <property type="term" value="P:ribosomal small subunit biogenesis"/>
    <property type="evidence" value="ECO:0007669"/>
    <property type="project" value="UniProtKB-UniRule"/>
</dbReference>
<dbReference type="CDD" id="cd01854">
    <property type="entry name" value="YjeQ_EngC"/>
    <property type="match status" value="1"/>
</dbReference>
<dbReference type="FunFam" id="1.10.40.50:FF:000001">
    <property type="entry name" value="Small ribosomal subunit biogenesis GTPase RsgA"/>
    <property type="match status" value="1"/>
</dbReference>
<dbReference type="FunFam" id="2.40.50.140:FF:000122">
    <property type="entry name" value="Small ribosomal subunit biogenesis GTPase RsgA"/>
    <property type="match status" value="1"/>
</dbReference>
<dbReference type="FunFam" id="3.40.50.300:FF:000389">
    <property type="entry name" value="Small ribosomal subunit biogenesis GTPase RsgA"/>
    <property type="match status" value="1"/>
</dbReference>
<dbReference type="Gene3D" id="2.40.50.140">
    <property type="entry name" value="Nucleic acid-binding proteins"/>
    <property type="match status" value="1"/>
</dbReference>
<dbReference type="Gene3D" id="3.40.50.300">
    <property type="entry name" value="P-loop containing nucleotide triphosphate hydrolases"/>
    <property type="match status" value="1"/>
</dbReference>
<dbReference type="Gene3D" id="1.10.40.50">
    <property type="entry name" value="Probable gtpase engc, domain 3"/>
    <property type="match status" value="1"/>
</dbReference>
<dbReference type="HAMAP" id="MF_01820">
    <property type="entry name" value="GTPase_RsgA"/>
    <property type="match status" value="1"/>
</dbReference>
<dbReference type="InterPro" id="IPR030378">
    <property type="entry name" value="G_CP_dom"/>
</dbReference>
<dbReference type="InterPro" id="IPR012340">
    <property type="entry name" value="NA-bd_OB-fold"/>
</dbReference>
<dbReference type="InterPro" id="IPR027417">
    <property type="entry name" value="P-loop_NTPase"/>
</dbReference>
<dbReference type="InterPro" id="IPR004881">
    <property type="entry name" value="Ribosome_biogen_GTPase_RsgA"/>
</dbReference>
<dbReference type="InterPro" id="IPR010914">
    <property type="entry name" value="RsgA_GTPase_dom"/>
</dbReference>
<dbReference type="NCBIfam" id="NF008931">
    <property type="entry name" value="PRK12288.1"/>
    <property type="match status" value="1"/>
</dbReference>
<dbReference type="NCBIfam" id="TIGR00157">
    <property type="entry name" value="ribosome small subunit-dependent GTPase A"/>
    <property type="match status" value="1"/>
</dbReference>
<dbReference type="PANTHER" id="PTHR32120">
    <property type="entry name" value="SMALL RIBOSOMAL SUBUNIT BIOGENESIS GTPASE RSGA"/>
    <property type="match status" value="1"/>
</dbReference>
<dbReference type="PANTHER" id="PTHR32120:SF11">
    <property type="entry name" value="SMALL RIBOSOMAL SUBUNIT BIOGENESIS GTPASE RSGA 1, MITOCHONDRIAL-RELATED"/>
    <property type="match status" value="1"/>
</dbReference>
<dbReference type="Pfam" id="PF03193">
    <property type="entry name" value="RsgA_GTPase"/>
    <property type="match status" value="1"/>
</dbReference>
<dbReference type="SUPFAM" id="SSF52540">
    <property type="entry name" value="P-loop containing nucleoside triphosphate hydrolases"/>
    <property type="match status" value="1"/>
</dbReference>
<dbReference type="PROSITE" id="PS50936">
    <property type="entry name" value="ENGC_GTPASE"/>
    <property type="match status" value="1"/>
</dbReference>
<dbReference type="PROSITE" id="PS51721">
    <property type="entry name" value="G_CP"/>
    <property type="match status" value="1"/>
</dbReference>
<proteinExistence type="inferred from homology"/>
<feature type="chain" id="PRO_1000188061" description="Small ribosomal subunit biogenesis GTPase RsgA">
    <location>
        <begin position="1"/>
        <end position="350"/>
    </location>
</feature>
<feature type="domain" description="CP-type G" evidence="2">
    <location>
        <begin position="104"/>
        <end position="273"/>
    </location>
</feature>
<feature type="region of interest" description="Disordered" evidence="3">
    <location>
        <begin position="1"/>
        <end position="33"/>
    </location>
</feature>
<feature type="compositionally biased region" description="Polar residues" evidence="3">
    <location>
        <begin position="1"/>
        <end position="17"/>
    </location>
</feature>
<feature type="binding site" evidence="1">
    <location>
        <begin position="160"/>
        <end position="163"/>
    </location>
    <ligand>
        <name>GTP</name>
        <dbReference type="ChEBI" id="CHEBI:37565"/>
    </ligand>
</feature>
<feature type="binding site" evidence="1">
    <location>
        <begin position="214"/>
        <end position="222"/>
    </location>
    <ligand>
        <name>GTP</name>
        <dbReference type="ChEBI" id="CHEBI:37565"/>
    </ligand>
</feature>
<feature type="binding site" evidence="1">
    <location>
        <position position="297"/>
    </location>
    <ligand>
        <name>Zn(2+)</name>
        <dbReference type="ChEBI" id="CHEBI:29105"/>
    </ligand>
</feature>
<feature type="binding site" evidence="1">
    <location>
        <position position="302"/>
    </location>
    <ligand>
        <name>Zn(2+)</name>
        <dbReference type="ChEBI" id="CHEBI:29105"/>
    </ligand>
</feature>
<feature type="binding site" evidence="1">
    <location>
        <position position="304"/>
    </location>
    <ligand>
        <name>Zn(2+)</name>
        <dbReference type="ChEBI" id="CHEBI:29105"/>
    </ligand>
</feature>
<feature type="binding site" evidence="1">
    <location>
        <position position="310"/>
    </location>
    <ligand>
        <name>Zn(2+)</name>
        <dbReference type="ChEBI" id="CHEBI:29105"/>
    </ligand>
</feature>